<evidence type="ECO:0000255" key="1">
    <source>
        <dbReference type="HAMAP-Rule" id="MF_00076"/>
    </source>
</evidence>
<accession>Q0A5D0</accession>
<dbReference type="EC" id="4.2.1.19" evidence="1"/>
<dbReference type="EMBL" id="CP000453">
    <property type="protein sequence ID" value="ABI57957.1"/>
    <property type="molecule type" value="Genomic_DNA"/>
</dbReference>
<dbReference type="RefSeq" id="WP_011630350.1">
    <property type="nucleotide sequence ID" value="NC_008340.1"/>
</dbReference>
<dbReference type="SMR" id="Q0A5D0"/>
<dbReference type="KEGG" id="aeh:Mlg_2617"/>
<dbReference type="eggNOG" id="COG0131">
    <property type="taxonomic scope" value="Bacteria"/>
</dbReference>
<dbReference type="HOGENOM" id="CLU_044308_3_0_6"/>
<dbReference type="OrthoDB" id="9790411at2"/>
<dbReference type="UniPathway" id="UPA00031">
    <property type="reaction ID" value="UER00011"/>
</dbReference>
<dbReference type="Proteomes" id="UP000001962">
    <property type="component" value="Chromosome"/>
</dbReference>
<dbReference type="GO" id="GO:0005737">
    <property type="term" value="C:cytoplasm"/>
    <property type="evidence" value="ECO:0007669"/>
    <property type="project" value="UniProtKB-SubCell"/>
</dbReference>
<dbReference type="GO" id="GO:0004424">
    <property type="term" value="F:imidazoleglycerol-phosphate dehydratase activity"/>
    <property type="evidence" value="ECO:0007669"/>
    <property type="project" value="UniProtKB-UniRule"/>
</dbReference>
<dbReference type="GO" id="GO:0000105">
    <property type="term" value="P:L-histidine biosynthetic process"/>
    <property type="evidence" value="ECO:0007669"/>
    <property type="project" value="UniProtKB-UniRule"/>
</dbReference>
<dbReference type="CDD" id="cd07914">
    <property type="entry name" value="IGPD"/>
    <property type="match status" value="1"/>
</dbReference>
<dbReference type="FunFam" id="3.30.230.40:FF:000002">
    <property type="entry name" value="Imidazoleglycerol-phosphate dehydratase"/>
    <property type="match status" value="1"/>
</dbReference>
<dbReference type="FunFam" id="3.30.230.40:FF:000003">
    <property type="entry name" value="Imidazoleglycerol-phosphate dehydratase HisB"/>
    <property type="match status" value="1"/>
</dbReference>
<dbReference type="Gene3D" id="3.30.230.40">
    <property type="entry name" value="Imidazole glycerol phosphate dehydratase, domain 1"/>
    <property type="match status" value="2"/>
</dbReference>
<dbReference type="HAMAP" id="MF_00076">
    <property type="entry name" value="HisB"/>
    <property type="match status" value="1"/>
</dbReference>
<dbReference type="InterPro" id="IPR038494">
    <property type="entry name" value="IGPD_sf"/>
</dbReference>
<dbReference type="InterPro" id="IPR000807">
    <property type="entry name" value="ImidazoleglycerolP_deHydtase"/>
</dbReference>
<dbReference type="InterPro" id="IPR020565">
    <property type="entry name" value="ImidazoleglycerP_deHydtase_CS"/>
</dbReference>
<dbReference type="InterPro" id="IPR020568">
    <property type="entry name" value="Ribosomal_Su5_D2-typ_SF"/>
</dbReference>
<dbReference type="NCBIfam" id="NF002106">
    <property type="entry name" value="PRK00951.1-1"/>
    <property type="match status" value="1"/>
</dbReference>
<dbReference type="NCBIfam" id="NF002109">
    <property type="entry name" value="PRK00951.1-5"/>
    <property type="match status" value="1"/>
</dbReference>
<dbReference type="NCBIfam" id="NF002111">
    <property type="entry name" value="PRK00951.2-1"/>
    <property type="match status" value="1"/>
</dbReference>
<dbReference type="NCBIfam" id="NF002114">
    <property type="entry name" value="PRK00951.2-4"/>
    <property type="match status" value="1"/>
</dbReference>
<dbReference type="PANTHER" id="PTHR23133:SF2">
    <property type="entry name" value="IMIDAZOLEGLYCEROL-PHOSPHATE DEHYDRATASE"/>
    <property type="match status" value="1"/>
</dbReference>
<dbReference type="PANTHER" id="PTHR23133">
    <property type="entry name" value="IMIDAZOLEGLYCEROL-PHOSPHATE DEHYDRATASE HIS7"/>
    <property type="match status" value="1"/>
</dbReference>
<dbReference type="Pfam" id="PF00475">
    <property type="entry name" value="IGPD"/>
    <property type="match status" value="1"/>
</dbReference>
<dbReference type="SUPFAM" id="SSF54211">
    <property type="entry name" value="Ribosomal protein S5 domain 2-like"/>
    <property type="match status" value="2"/>
</dbReference>
<dbReference type="PROSITE" id="PS00954">
    <property type="entry name" value="IGP_DEHYDRATASE_1"/>
    <property type="match status" value="1"/>
</dbReference>
<dbReference type="PROSITE" id="PS00955">
    <property type="entry name" value="IGP_DEHYDRATASE_2"/>
    <property type="match status" value="1"/>
</dbReference>
<name>HIS7_ALKEH</name>
<feature type="chain" id="PRO_1000057514" description="Imidazoleglycerol-phosphate dehydratase">
    <location>
        <begin position="1"/>
        <end position="197"/>
    </location>
</feature>
<keyword id="KW-0028">Amino-acid biosynthesis</keyword>
<keyword id="KW-0963">Cytoplasm</keyword>
<keyword id="KW-0368">Histidine biosynthesis</keyword>
<keyword id="KW-0456">Lyase</keyword>
<keyword id="KW-1185">Reference proteome</keyword>
<comment type="catalytic activity">
    <reaction evidence="1">
        <text>D-erythro-1-(imidazol-4-yl)glycerol 3-phosphate = 3-(imidazol-4-yl)-2-oxopropyl phosphate + H2O</text>
        <dbReference type="Rhea" id="RHEA:11040"/>
        <dbReference type="ChEBI" id="CHEBI:15377"/>
        <dbReference type="ChEBI" id="CHEBI:57766"/>
        <dbReference type="ChEBI" id="CHEBI:58278"/>
        <dbReference type="EC" id="4.2.1.19"/>
    </reaction>
</comment>
<comment type="pathway">
    <text evidence="1">Amino-acid biosynthesis; L-histidine biosynthesis; L-histidine from 5-phospho-alpha-D-ribose 1-diphosphate: step 6/9.</text>
</comment>
<comment type="subcellular location">
    <subcellularLocation>
        <location evidence="1">Cytoplasm</location>
    </subcellularLocation>
</comment>
<comment type="similarity">
    <text evidence="1">Belongs to the imidazoleglycerol-phosphate dehydratase family.</text>
</comment>
<proteinExistence type="inferred from homology"/>
<organism>
    <name type="scientific">Alkalilimnicola ehrlichii (strain ATCC BAA-1101 / DSM 17681 / MLHE-1)</name>
    <dbReference type="NCBI Taxonomy" id="187272"/>
    <lineage>
        <taxon>Bacteria</taxon>
        <taxon>Pseudomonadati</taxon>
        <taxon>Pseudomonadota</taxon>
        <taxon>Gammaproteobacteria</taxon>
        <taxon>Chromatiales</taxon>
        <taxon>Ectothiorhodospiraceae</taxon>
        <taxon>Alkalilimnicola</taxon>
    </lineage>
</organism>
<gene>
    <name evidence="1" type="primary">hisB</name>
    <name type="ordered locus">Mlg_2617</name>
</gene>
<reference key="1">
    <citation type="submission" date="2006-08" db="EMBL/GenBank/DDBJ databases">
        <title>Complete sequence of Alkalilimnicola ehrilichei MLHE-1.</title>
        <authorList>
            <person name="Copeland A."/>
            <person name="Lucas S."/>
            <person name="Lapidus A."/>
            <person name="Barry K."/>
            <person name="Detter J.C."/>
            <person name="Glavina del Rio T."/>
            <person name="Hammon N."/>
            <person name="Israni S."/>
            <person name="Dalin E."/>
            <person name="Tice H."/>
            <person name="Pitluck S."/>
            <person name="Sims D."/>
            <person name="Brettin T."/>
            <person name="Bruce D."/>
            <person name="Han C."/>
            <person name="Tapia R."/>
            <person name="Gilna P."/>
            <person name="Schmutz J."/>
            <person name="Larimer F."/>
            <person name="Land M."/>
            <person name="Hauser L."/>
            <person name="Kyrpides N."/>
            <person name="Mikhailova N."/>
            <person name="Oremland R.S."/>
            <person name="Hoeft S.E."/>
            <person name="Switzer-Blum J."/>
            <person name="Kulp T."/>
            <person name="King G."/>
            <person name="Tabita R."/>
            <person name="Witte B."/>
            <person name="Santini J.M."/>
            <person name="Basu P."/>
            <person name="Hollibaugh J.T."/>
            <person name="Xie G."/>
            <person name="Stolz J.F."/>
            <person name="Richardson P."/>
        </authorList>
    </citation>
    <scope>NUCLEOTIDE SEQUENCE [LARGE SCALE GENOMIC DNA]</scope>
    <source>
        <strain>ATCC BAA-1101 / DSM 17681 / MLHE-1</strain>
    </source>
</reference>
<sequence length="197" mass="21919">MMNRSAEVQRDTLETRVKVRLDLDGTGESRIRIGVPFMEHMLDQVARHGLIDLDIEADGDTHIDDHHTVEDVGITLGQALAQALGDKKGIRRYGHAYVPLDEALSRVVVDFSGRPGLQFHVDFVRARIGQFDVDLFQEFFQGLVNHAALTLHVDNLRGINAHHQAETVFKALGRALRMAAEADPRQADRIPSTKGAL</sequence>
<protein>
    <recommendedName>
        <fullName evidence="1">Imidazoleglycerol-phosphate dehydratase</fullName>
        <shortName evidence="1">IGPD</shortName>
        <ecNumber evidence="1">4.2.1.19</ecNumber>
    </recommendedName>
</protein>